<protein>
    <recommendedName>
        <fullName evidence="1">5'-nucleotidase SurE</fullName>
        <ecNumber evidence="1">3.1.3.5</ecNumber>
    </recommendedName>
    <alternativeName>
        <fullName evidence="1">Nucleoside 5'-monophosphate phosphohydrolase</fullName>
    </alternativeName>
</protein>
<reference key="1">
    <citation type="submission" date="2008-01" db="EMBL/GenBank/DDBJ databases">
        <title>Complete sequence of chromosome of Caulobacter sp. K31.</title>
        <authorList>
            <consortium name="US DOE Joint Genome Institute"/>
            <person name="Copeland A."/>
            <person name="Lucas S."/>
            <person name="Lapidus A."/>
            <person name="Barry K."/>
            <person name="Glavina del Rio T."/>
            <person name="Dalin E."/>
            <person name="Tice H."/>
            <person name="Pitluck S."/>
            <person name="Bruce D."/>
            <person name="Goodwin L."/>
            <person name="Thompson L.S."/>
            <person name="Brettin T."/>
            <person name="Detter J.C."/>
            <person name="Han C."/>
            <person name="Schmutz J."/>
            <person name="Larimer F."/>
            <person name="Land M."/>
            <person name="Hauser L."/>
            <person name="Kyrpides N."/>
            <person name="Kim E."/>
            <person name="Stephens C."/>
            <person name="Richardson P."/>
        </authorList>
    </citation>
    <scope>NUCLEOTIDE SEQUENCE [LARGE SCALE GENOMIC DNA]</scope>
    <source>
        <strain>K31</strain>
    </source>
</reference>
<accession>B0T1Q2</accession>
<name>SURE_CAUSK</name>
<keyword id="KW-0963">Cytoplasm</keyword>
<keyword id="KW-0378">Hydrolase</keyword>
<keyword id="KW-0479">Metal-binding</keyword>
<keyword id="KW-0547">Nucleotide-binding</keyword>
<gene>
    <name evidence="1" type="primary">surE</name>
    <name type="ordered locus">Caul_3114</name>
</gene>
<comment type="function">
    <text evidence="1">Nucleotidase that shows phosphatase activity on nucleoside 5'-monophosphates.</text>
</comment>
<comment type="catalytic activity">
    <reaction evidence="1">
        <text>a ribonucleoside 5'-phosphate + H2O = a ribonucleoside + phosphate</text>
        <dbReference type="Rhea" id="RHEA:12484"/>
        <dbReference type="ChEBI" id="CHEBI:15377"/>
        <dbReference type="ChEBI" id="CHEBI:18254"/>
        <dbReference type="ChEBI" id="CHEBI:43474"/>
        <dbReference type="ChEBI" id="CHEBI:58043"/>
        <dbReference type="EC" id="3.1.3.5"/>
    </reaction>
</comment>
<comment type="cofactor">
    <cofactor evidence="1">
        <name>a divalent metal cation</name>
        <dbReference type="ChEBI" id="CHEBI:60240"/>
    </cofactor>
    <text evidence="1">Binds 1 divalent metal cation per subunit.</text>
</comment>
<comment type="subcellular location">
    <subcellularLocation>
        <location evidence="1">Cytoplasm</location>
    </subcellularLocation>
</comment>
<comment type="similarity">
    <text evidence="1">Belongs to the SurE nucleotidase family.</text>
</comment>
<sequence length="269" mass="29400">MRILLTNDDGIHAPGLGSLERIARMLSDDIWIVAPEYEQSGAGRALTLSDPIRVRRIDPRRFAVEGTPTDCVAMAMQQLIEGPAPDLVLSGVNRGQNLAEDVTLSGTVAGAIEGMAFGIRSIALSQAMTYFHDEVVAHWETAEHFGPGIVQRLLEVGWPKDVIINVNFPAVAPEMVTEVEVTRQGFRDSHMRSMEKRTDLRGRDYYWTGFVVKPSNPAEGTDLKAVYQGRISVTPLHIDLTHNQTVAAMKGALGGTPPRFDQPGLETAS</sequence>
<organism>
    <name type="scientific">Caulobacter sp. (strain K31)</name>
    <dbReference type="NCBI Taxonomy" id="366602"/>
    <lineage>
        <taxon>Bacteria</taxon>
        <taxon>Pseudomonadati</taxon>
        <taxon>Pseudomonadota</taxon>
        <taxon>Alphaproteobacteria</taxon>
        <taxon>Caulobacterales</taxon>
        <taxon>Caulobacteraceae</taxon>
        <taxon>Caulobacter</taxon>
    </lineage>
</organism>
<proteinExistence type="inferred from homology"/>
<dbReference type="EC" id="3.1.3.5" evidence="1"/>
<dbReference type="EMBL" id="CP000927">
    <property type="protein sequence ID" value="ABZ72241.1"/>
    <property type="molecule type" value="Genomic_DNA"/>
</dbReference>
<dbReference type="SMR" id="B0T1Q2"/>
<dbReference type="STRING" id="366602.Caul_3114"/>
<dbReference type="KEGG" id="cak:Caul_3114"/>
<dbReference type="eggNOG" id="COG0496">
    <property type="taxonomic scope" value="Bacteria"/>
</dbReference>
<dbReference type="HOGENOM" id="CLU_045192_1_2_5"/>
<dbReference type="OrthoDB" id="9780815at2"/>
<dbReference type="GO" id="GO:0005737">
    <property type="term" value="C:cytoplasm"/>
    <property type="evidence" value="ECO:0007669"/>
    <property type="project" value="UniProtKB-SubCell"/>
</dbReference>
<dbReference type="GO" id="GO:0008254">
    <property type="term" value="F:3'-nucleotidase activity"/>
    <property type="evidence" value="ECO:0007669"/>
    <property type="project" value="TreeGrafter"/>
</dbReference>
<dbReference type="GO" id="GO:0008253">
    <property type="term" value="F:5'-nucleotidase activity"/>
    <property type="evidence" value="ECO:0007669"/>
    <property type="project" value="UniProtKB-UniRule"/>
</dbReference>
<dbReference type="GO" id="GO:0004309">
    <property type="term" value="F:exopolyphosphatase activity"/>
    <property type="evidence" value="ECO:0007669"/>
    <property type="project" value="TreeGrafter"/>
</dbReference>
<dbReference type="GO" id="GO:0046872">
    <property type="term" value="F:metal ion binding"/>
    <property type="evidence" value="ECO:0007669"/>
    <property type="project" value="UniProtKB-UniRule"/>
</dbReference>
<dbReference type="GO" id="GO:0000166">
    <property type="term" value="F:nucleotide binding"/>
    <property type="evidence" value="ECO:0007669"/>
    <property type="project" value="UniProtKB-KW"/>
</dbReference>
<dbReference type="FunFam" id="3.40.1210.10:FF:000001">
    <property type="entry name" value="5'/3'-nucleotidase SurE"/>
    <property type="match status" value="1"/>
</dbReference>
<dbReference type="Gene3D" id="3.40.1210.10">
    <property type="entry name" value="Survival protein SurE-like phosphatase/nucleotidase"/>
    <property type="match status" value="1"/>
</dbReference>
<dbReference type="HAMAP" id="MF_00060">
    <property type="entry name" value="SurE"/>
    <property type="match status" value="1"/>
</dbReference>
<dbReference type="InterPro" id="IPR030048">
    <property type="entry name" value="SurE"/>
</dbReference>
<dbReference type="InterPro" id="IPR002828">
    <property type="entry name" value="SurE-like_Pase/nucleotidase"/>
</dbReference>
<dbReference type="InterPro" id="IPR036523">
    <property type="entry name" value="SurE-like_sf"/>
</dbReference>
<dbReference type="NCBIfam" id="NF001490">
    <property type="entry name" value="PRK00346.1-4"/>
    <property type="match status" value="1"/>
</dbReference>
<dbReference type="NCBIfam" id="TIGR00087">
    <property type="entry name" value="surE"/>
    <property type="match status" value="1"/>
</dbReference>
<dbReference type="PANTHER" id="PTHR30457">
    <property type="entry name" value="5'-NUCLEOTIDASE SURE"/>
    <property type="match status" value="1"/>
</dbReference>
<dbReference type="PANTHER" id="PTHR30457:SF12">
    <property type="entry name" value="5'_3'-NUCLEOTIDASE SURE"/>
    <property type="match status" value="1"/>
</dbReference>
<dbReference type="Pfam" id="PF01975">
    <property type="entry name" value="SurE"/>
    <property type="match status" value="1"/>
</dbReference>
<dbReference type="SUPFAM" id="SSF64167">
    <property type="entry name" value="SurE-like"/>
    <property type="match status" value="1"/>
</dbReference>
<feature type="chain" id="PRO_1000075020" description="5'-nucleotidase SurE">
    <location>
        <begin position="1"/>
        <end position="269"/>
    </location>
</feature>
<feature type="binding site" evidence="1">
    <location>
        <position position="8"/>
    </location>
    <ligand>
        <name>a divalent metal cation</name>
        <dbReference type="ChEBI" id="CHEBI:60240"/>
    </ligand>
</feature>
<feature type="binding site" evidence="1">
    <location>
        <position position="9"/>
    </location>
    <ligand>
        <name>a divalent metal cation</name>
        <dbReference type="ChEBI" id="CHEBI:60240"/>
    </ligand>
</feature>
<feature type="binding site" evidence="1">
    <location>
        <position position="40"/>
    </location>
    <ligand>
        <name>a divalent metal cation</name>
        <dbReference type="ChEBI" id="CHEBI:60240"/>
    </ligand>
</feature>
<feature type="binding site" evidence="1">
    <location>
        <position position="93"/>
    </location>
    <ligand>
        <name>a divalent metal cation</name>
        <dbReference type="ChEBI" id="CHEBI:60240"/>
    </ligand>
</feature>
<evidence type="ECO:0000255" key="1">
    <source>
        <dbReference type="HAMAP-Rule" id="MF_00060"/>
    </source>
</evidence>